<feature type="chain" id="PRO_0000447847" description="Alcohol dehydrogenase 2">
    <location>
        <begin position="1"/>
        <end position="379"/>
    </location>
</feature>
<feature type="binding site" evidence="1">
    <location>
        <position position="48"/>
    </location>
    <ligand>
        <name>Zn(2+)</name>
        <dbReference type="ChEBI" id="CHEBI:29105"/>
        <label>1</label>
        <note>catalytic</note>
    </ligand>
</feature>
<feature type="binding site" evidence="1">
    <location>
        <begin position="49"/>
        <end position="53"/>
    </location>
    <ligand>
        <name>NAD(+)</name>
        <dbReference type="ChEBI" id="CHEBI:57540"/>
    </ligand>
</feature>
<feature type="binding site" evidence="1">
    <location>
        <position position="69"/>
    </location>
    <ligand>
        <name>Zn(2+)</name>
        <dbReference type="ChEBI" id="CHEBI:29105"/>
        <label>1</label>
        <note>catalytic</note>
    </ligand>
</feature>
<feature type="binding site" evidence="1">
    <location>
        <position position="100"/>
    </location>
    <ligand>
        <name>Zn(2+)</name>
        <dbReference type="ChEBI" id="CHEBI:29105"/>
        <label>2</label>
    </ligand>
</feature>
<feature type="binding site" evidence="1">
    <location>
        <position position="103"/>
    </location>
    <ligand>
        <name>Zn(2+)</name>
        <dbReference type="ChEBI" id="CHEBI:29105"/>
        <label>2</label>
    </ligand>
</feature>
<feature type="binding site" evidence="1">
    <location>
        <position position="106"/>
    </location>
    <ligand>
        <name>Zn(2+)</name>
        <dbReference type="ChEBI" id="CHEBI:29105"/>
        <label>2</label>
    </ligand>
</feature>
<feature type="binding site" evidence="1">
    <location>
        <position position="114"/>
    </location>
    <ligand>
        <name>Zn(2+)</name>
        <dbReference type="ChEBI" id="CHEBI:29105"/>
        <label>2</label>
    </ligand>
</feature>
<feature type="binding site" evidence="1">
    <location>
        <position position="178"/>
    </location>
    <ligand>
        <name>Zn(2+)</name>
        <dbReference type="ChEBI" id="CHEBI:29105"/>
        <label>1</label>
        <note>catalytic</note>
    </ligand>
</feature>
<feature type="binding site" evidence="1">
    <location>
        <begin position="203"/>
        <end position="208"/>
    </location>
    <ligand>
        <name>NAD(+)</name>
        <dbReference type="ChEBI" id="CHEBI:57540"/>
    </ligand>
</feature>
<feature type="binding site" evidence="1">
    <location>
        <position position="227"/>
    </location>
    <ligand>
        <name>NAD(+)</name>
        <dbReference type="ChEBI" id="CHEBI:57540"/>
    </ligand>
</feature>
<feature type="binding site" evidence="1">
    <location>
        <position position="232"/>
    </location>
    <ligand>
        <name>NAD(+)</name>
        <dbReference type="ChEBI" id="CHEBI:57540"/>
    </ligand>
</feature>
<feature type="binding site" evidence="1">
    <location>
        <begin position="275"/>
        <end position="277"/>
    </location>
    <ligand>
        <name>NAD(+)</name>
        <dbReference type="ChEBI" id="CHEBI:57540"/>
    </ligand>
</feature>
<feature type="binding site" evidence="1">
    <location>
        <begin position="298"/>
        <end position="300"/>
    </location>
    <ligand>
        <name>NAD(+)</name>
        <dbReference type="ChEBI" id="CHEBI:57540"/>
    </ligand>
</feature>
<feature type="binding site" evidence="1">
    <location>
        <begin position="321"/>
        <end position="323"/>
    </location>
    <ligand>
        <name>NAD(+)</name>
        <dbReference type="ChEBI" id="CHEBI:57540"/>
    </ligand>
</feature>
<proteinExistence type="evidence at protein level"/>
<protein>
    <recommendedName>
        <fullName evidence="3">Alcohol dehydrogenase 2</fullName>
        <shortName evidence="3">TcADH2</shortName>
        <ecNumber evidence="2">1.1.1.144</ecNumber>
        <ecNumber evidence="2">1.1.1.347</ecNumber>
    </recommendedName>
    <alternativeName>
        <fullName evidence="5">Trans-chrysanthemal synthase</fullName>
        <ecNumber evidence="2">1.1.1.-</ecNumber>
    </alternativeName>
</protein>
<reference key="1">
    <citation type="journal article" date="2018" name="Plant Physiol.">
        <title>Coexpression analysis identifies two oxidoreductases involved in the biosynthesis of the monoterpene acid moiety of natural pyrethrin insecticides in Tanacetum cinerariifolium.</title>
        <authorList>
            <person name="Xu H."/>
            <person name="Moghe G.D."/>
            <person name="Wiegert-Rininger K."/>
            <person name="Schilmiller A.L."/>
            <person name="Barry C.S."/>
            <person name="Last R.L."/>
            <person name="Pichersky E."/>
        </authorList>
    </citation>
    <scope>NUCLEOTIDE SEQUENCE [MRNA]</scope>
    <scope>FUNCTION</scope>
    <scope>CATALYTIC ACTIVITY</scope>
    <scope>PATHWAY</scope>
    <scope>TISSUE SPECIFICITY</scope>
    <scope>BIOPHYSICOCHEMICAL PROPERTIES</scope>
</reference>
<reference key="2">
    <citation type="journal article" date="2005" name="Phytochemistry">
        <title>Biosynthesis of pyrethrin I in seedlings of Chrysanthemum cinerariaefolium.</title>
        <authorList>
            <person name="Matsuda K."/>
            <person name="Kikuta Y."/>
            <person name="Haba A."/>
            <person name="Nakayama K."/>
            <person name="Katsuda Y."/>
            <person name="Hatanaka A."/>
            <person name="Komai K."/>
        </authorList>
    </citation>
    <scope>REVIEW</scope>
</reference>
<reference key="3">
    <citation type="journal article" date="2019" name="Nat. Prod. Rep.">
        <title>Non-volatile natural products in plant glandular trichomes: chemistry, biological activities and biosynthesis.</title>
        <authorList>
            <person name="Liu Y."/>
            <person name="Jing S.-X."/>
            <person name="Luo S.-H."/>
            <person name="Li S.-H."/>
        </authorList>
    </citation>
    <scope>REVIEW</scope>
</reference>
<name>ADH2_TANCI</name>
<comment type="function">
    <text evidence="2 4">Component of the monoterpenoid pyrethrins biosynthesis; pyrethrins are widely used plant-derived pesticide (PubMed:30468448). Mediates the conversion of trans-chrysanthemol into trans-chrysanthemal (PubMed:29122986).</text>
</comment>
<comment type="catalytic activity">
    <reaction evidence="2">
        <text>(R,R)-chrysanthemol + NAD(+) = (1R,3R)-chrysanthemal + NADH + H(+)</text>
        <dbReference type="Rhea" id="RHEA:60668"/>
        <dbReference type="ChEBI" id="CHEBI:15378"/>
        <dbReference type="ChEBI" id="CHEBI:57540"/>
        <dbReference type="ChEBI" id="CHEBI:57945"/>
        <dbReference type="ChEBI" id="CHEBI:143898"/>
        <dbReference type="ChEBI" id="CHEBI:143899"/>
    </reaction>
    <physiologicalReaction direction="left-to-right" evidence="2">
        <dbReference type="Rhea" id="RHEA:60669"/>
    </physiologicalReaction>
</comment>
<comment type="catalytic activity">
    <reaction evidence="2">
        <text>nerol + NAD(+) = neral + NADH + H(+)</text>
        <dbReference type="Rhea" id="RHEA:60672"/>
        <dbReference type="ChEBI" id="CHEBI:15378"/>
        <dbReference type="ChEBI" id="CHEBI:29020"/>
        <dbReference type="ChEBI" id="CHEBI:29452"/>
        <dbReference type="ChEBI" id="CHEBI:57540"/>
        <dbReference type="ChEBI" id="CHEBI:57945"/>
    </reaction>
    <physiologicalReaction direction="left-to-right" evidence="2">
        <dbReference type="Rhea" id="RHEA:60673"/>
    </physiologicalReaction>
</comment>
<comment type="catalytic activity">
    <reaction evidence="2">
        <text>(S)-(-)-citronellol + NAD(+) = (S)-(-)-citronellal + NADH + H(+)</text>
        <dbReference type="Rhea" id="RHEA:60676"/>
        <dbReference type="ChEBI" id="CHEBI:88"/>
        <dbReference type="ChEBI" id="CHEBI:368"/>
        <dbReference type="ChEBI" id="CHEBI:15378"/>
        <dbReference type="ChEBI" id="CHEBI:57540"/>
        <dbReference type="ChEBI" id="CHEBI:57945"/>
    </reaction>
    <physiologicalReaction direction="left-to-right" evidence="2">
        <dbReference type="Rhea" id="RHEA:60677"/>
    </physiologicalReaction>
</comment>
<comment type="catalytic activity">
    <reaction evidence="2">
        <text>perillyl alcohol + NAD(+) = perillyl aldehyde + NADH + H(+)</text>
        <dbReference type="Rhea" id="RHEA:10664"/>
        <dbReference type="ChEBI" id="CHEBI:15378"/>
        <dbReference type="ChEBI" id="CHEBI:15420"/>
        <dbReference type="ChEBI" id="CHEBI:15421"/>
        <dbReference type="ChEBI" id="CHEBI:57540"/>
        <dbReference type="ChEBI" id="CHEBI:57945"/>
        <dbReference type="EC" id="1.1.1.144"/>
    </reaction>
    <physiologicalReaction direction="left-to-right" evidence="2">
        <dbReference type="Rhea" id="RHEA:10665"/>
    </physiologicalReaction>
</comment>
<comment type="catalytic activity">
    <reaction evidence="2">
        <text>(6E)-8-hydroxygeraniol + NAD(+) = (6E)-8-hydroxygeranial + NADH + H(+)</text>
        <dbReference type="Rhea" id="RHEA:58848"/>
        <dbReference type="ChEBI" id="CHEBI:15378"/>
        <dbReference type="ChEBI" id="CHEBI:57540"/>
        <dbReference type="ChEBI" id="CHEBI:57945"/>
        <dbReference type="ChEBI" id="CHEBI:64235"/>
        <dbReference type="ChEBI" id="CHEBI:64238"/>
    </reaction>
    <physiologicalReaction direction="left-to-right" evidence="2">
        <dbReference type="Rhea" id="RHEA:58849"/>
    </physiologicalReaction>
</comment>
<comment type="catalytic activity">
    <reaction evidence="2">
        <text>(2E)-geraniol + NAD(+) = (2E)-geranial + NADH + H(+)</text>
        <dbReference type="Rhea" id="RHEA:34347"/>
        <dbReference type="ChEBI" id="CHEBI:15378"/>
        <dbReference type="ChEBI" id="CHEBI:16980"/>
        <dbReference type="ChEBI" id="CHEBI:17447"/>
        <dbReference type="ChEBI" id="CHEBI:57540"/>
        <dbReference type="ChEBI" id="CHEBI:57945"/>
        <dbReference type="EC" id="1.1.1.347"/>
    </reaction>
    <physiologicalReaction direction="left-to-right" evidence="2">
        <dbReference type="Rhea" id="RHEA:34348"/>
    </physiologicalReaction>
</comment>
<comment type="cofactor">
    <cofactor evidence="1">
        <name>Zn(2+)</name>
        <dbReference type="ChEBI" id="CHEBI:29105"/>
    </cofactor>
    <text evidence="1">Binds 2 Zn(2+) ions per subunit.</text>
</comment>
<comment type="biophysicochemical properties">
    <kinetics>
        <KM evidence="2">236 uM for trans-chrysanthemol</KM>
        <KM evidence="2">193 uM for NAD(+)</KM>
        <text evidence="2">kcat is 0.75 sec(-1) with trans-chrysanthemol as substrate (in the presence of NAD(+)) (PubMed:29122986). kcat is 0.64 sec(-1) with NAD(+) as substrate (in the presence of trans-chrysanthemol) (PubMed:29122986).</text>
    </kinetics>
</comment>
<comment type="pathway">
    <text evidence="2">Isoprenoid biosynthesis.</text>
</comment>
<comment type="subunit">
    <text evidence="1">Homodimer.</text>
</comment>
<comment type="tissue specificity">
    <text evidence="2">Expressed in flowers and disk florets.</text>
</comment>
<comment type="similarity">
    <text evidence="5">Belongs to the zinc-containing alcohol dehydrogenase family. Class-IV subfamily.</text>
</comment>
<dbReference type="EC" id="1.1.1.144" evidence="2"/>
<dbReference type="EC" id="1.1.1.347" evidence="2"/>
<dbReference type="EC" id="1.1.1.-" evidence="2"/>
<dbReference type="EMBL" id="MF497444">
    <property type="protein sequence ID" value="AUQ44118.1"/>
    <property type="molecule type" value="mRNA"/>
</dbReference>
<dbReference type="SMR" id="A0A2I7G3B3"/>
<dbReference type="BioCyc" id="MetaCyc:MONOMER-20952"/>
<dbReference type="GO" id="GO:0005829">
    <property type="term" value="C:cytosol"/>
    <property type="evidence" value="ECO:0007669"/>
    <property type="project" value="TreeGrafter"/>
</dbReference>
<dbReference type="GO" id="GO:0018457">
    <property type="term" value="F:perillyl-alcohol dehydrogenase (NAD+) activity"/>
    <property type="evidence" value="ECO:0007669"/>
    <property type="project" value="UniProtKB-EC"/>
</dbReference>
<dbReference type="GO" id="GO:0051903">
    <property type="term" value="F:S-(hydroxymethyl)glutathione dehydrogenase [NAD(P)+] activity"/>
    <property type="evidence" value="ECO:0007669"/>
    <property type="project" value="TreeGrafter"/>
</dbReference>
<dbReference type="GO" id="GO:0008270">
    <property type="term" value="F:zinc ion binding"/>
    <property type="evidence" value="ECO:0007669"/>
    <property type="project" value="InterPro"/>
</dbReference>
<dbReference type="GO" id="GO:0046294">
    <property type="term" value="P:formaldehyde catabolic process"/>
    <property type="evidence" value="ECO:0007669"/>
    <property type="project" value="TreeGrafter"/>
</dbReference>
<dbReference type="GO" id="GO:0008299">
    <property type="term" value="P:isoprenoid biosynthetic process"/>
    <property type="evidence" value="ECO:0000314"/>
    <property type="project" value="UniProtKB"/>
</dbReference>
<dbReference type="CDD" id="cd08277">
    <property type="entry name" value="liver_alcohol_DH_like"/>
    <property type="match status" value="1"/>
</dbReference>
<dbReference type="FunFam" id="3.90.180.10:FF:000067">
    <property type="entry name" value="alcohol dehydrogenase 1-like isoform X1"/>
    <property type="match status" value="1"/>
</dbReference>
<dbReference type="FunFam" id="3.40.50.720:FF:000003">
    <property type="entry name" value="S-(hydroxymethyl)glutathione dehydrogenase"/>
    <property type="match status" value="1"/>
</dbReference>
<dbReference type="Gene3D" id="3.90.180.10">
    <property type="entry name" value="Medium-chain alcohol dehydrogenases, catalytic domain"/>
    <property type="match status" value="1"/>
</dbReference>
<dbReference type="Gene3D" id="3.40.50.720">
    <property type="entry name" value="NAD(P)-binding Rossmann-like Domain"/>
    <property type="match status" value="1"/>
</dbReference>
<dbReference type="InterPro" id="IPR013149">
    <property type="entry name" value="ADH-like_C"/>
</dbReference>
<dbReference type="InterPro" id="IPR013154">
    <property type="entry name" value="ADH-like_N"/>
</dbReference>
<dbReference type="InterPro" id="IPR002328">
    <property type="entry name" value="ADH_Zn_CS"/>
</dbReference>
<dbReference type="InterPro" id="IPR011032">
    <property type="entry name" value="GroES-like_sf"/>
</dbReference>
<dbReference type="InterPro" id="IPR036291">
    <property type="entry name" value="NAD(P)-bd_dom_sf"/>
</dbReference>
<dbReference type="PANTHER" id="PTHR43880">
    <property type="entry name" value="ALCOHOL DEHYDROGENASE"/>
    <property type="match status" value="1"/>
</dbReference>
<dbReference type="PANTHER" id="PTHR43880:SF38">
    <property type="entry name" value="ALCOHOL DEHYDROGENASE-RELATED"/>
    <property type="match status" value="1"/>
</dbReference>
<dbReference type="Pfam" id="PF08240">
    <property type="entry name" value="ADH_N"/>
    <property type="match status" value="1"/>
</dbReference>
<dbReference type="Pfam" id="PF00107">
    <property type="entry name" value="ADH_zinc_N"/>
    <property type="match status" value="1"/>
</dbReference>
<dbReference type="SUPFAM" id="SSF50129">
    <property type="entry name" value="GroES-like"/>
    <property type="match status" value="2"/>
</dbReference>
<dbReference type="SUPFAM" id="SSF51735">
    <property type="entry name" value="NAD(P)-binding Rossmann-fold domains"/>
    <property type="match status" value="1"/>
</dbReference>
<dbReference type="PROSITE" id="PS00059">
    <property type="entry name" value="ADH_ZINC"/>
    <property type="match status" value="1"/>
</dbReference>
<accession>A0A2I7G3B3</accession>
<sequence length="379" mass="41397">MSLNTPDVIICKAAVVRELGRSVMVEEIKVDPPKATEVRIKMLFASICHTDMLCFDGFPTPLFPRIPGHEGVGMVESVGEDIKTKLKPGDIVMPLFMGECGQCLNCKSKRTNLCHAYPLTLSGLLLDGTSRMSIAKTEETIYHHLSCSTWSEYMVIDINYVLKIDPKMHLPYASFLSCGFTTGFGAPWKETQITKGSIVAVFGLGAVGLGAIKGAQMQGASIIIGVDINENKAAKGKAFGMTHFINPKDHPNQLVSDMVRDITDGLGVDYCFECTGIASLLKEIIEASKIGFGTTILIGAAPDNVPISSLSLINGRTLKGTTFGGVRTRSDLPIILQKCMNEEIELDELMSHEIRLENIHEIFEILKKPDCVKILINFD</sequence>
<keyword id="KW-0414">Isoprene biosynthesis</keyword>
<keyword id="KW-0479">Metal-binding</keyword>
<keyword id="KW-0520">NAD</keyword>
<keyword id="KW-0560">Oxidoreductase</keyword>
<keyword id="KW-0862">Zinc</keyword>
<gene>
    <name evidence="3" type="primary">ADH2</name>
</gene>
<organism>
    <name type="scientific">Tanacetum cinerariifolium</name>
    <name type="common">Dalmatian daisy</name>
    <name type="synonym">Chrysanthemum cinerariifolium</name>
    <dbReference type="NCBI Taxonomy" id="118510"/>
    <lineage>
        <taxon>Eukaryota</taxon>
        <taxon>Viridiplantae</taxon>
        <taxon>Streptophyta</taxon>
        <taxon>Embryophyta</taxon>
        <taxon>Tracheophyta</taxon>
        <taxon>Spermatophyta</taxon>
        <taxon>Magnoliopsida</taxon>
        <taxon>eudicotyledons</taxon>
        <taxon>Gunneridae</taxon>
        <taxon>Pentapetalae</taxon>
        <taxon>asterids</taxon>
        <taxon>campanulids</taxon>
        <taxon>Asterales</taxon>
        <taxon>Asteraceae</taxon>
        <taxon>Asteroideae</taxon>
        <taxon>Anthemideae</taxon>
        <taxon>Anthemidinae</taxon>
        <taxon>Tanacetum</taxon>
    </lineage>
</organism>
<evidence type="ECO:0000250" key="1">
    <source>
        <dbReference type="UniProtKB" id="P40394"/>
    </source>
</evidence>
<evidence type="ECO:0000269" key="2">
    <source>
    </source>
</evidence>
<evidence type="ECO:0000303" key="3">
    <source>
    </source>
</evidence>
<evidence type="ECO:0000303" key="4">
    <source>
    </source>
</evidence>
<evidence type="ECO:0000305" key="5"/>